<comment type="function">
    <text evidence="1">Catalyzes the stereoinversion of LL-2,6-diaminopimelate (L,L-DAP) to meso-diaminopimelate (meso-DAP), a precursor of L-lysine and an essential component of the bacterial peptidoglycan.</text>
</comment>
<comment type="catalytic activity">
    <reaction evidence="1">
        <text>(2S,6S)-2,6-diaminopimelate = meso-2,6-diaminopimelate</text>
        <dbReference type="Rhea" id="RHEA:15393"/>
        <dbReference type="ChEBI" id="CHEBI:57609"/>
        <dbReference type="ChEBI" id="CHEBI:57791"/>
        <dbReference type="EC" id="5.1.1.7"/>
    </reaction>
</comment>
<comment type="pathway">
    <text evidence="1">Amino-acid biosynthesis; L-lysine biosynthesis via DAP pathway; DL-2,6-diaminopimelate from LL-2,6-diaminopimelate: step 1/1.</text>
</comment>
<comment type="subunit">
    <text evidence="1">Homodimer.</text>
</comment>
<comment type="subcellular location">
    <subcellularLocation>
        <location evidence="1">Cytoplasm</location>
    </subcellularLocation>
</comment>
<comment type="similarity">
    <text evidence="1">Belongs to the diaminopimelate epimerase family.</text>
</comment>
<protein>
    <recommendedName>
        <fullName evidence="1">Diaminopimelate epimerase</fullName>
        <shortName evidence="1">DAP epimerase</shortName>
        <ecNumber evidence="1">5.1.1.7</ecNumber>
    </recommendedName>
    <alternativeName>
        <fullName evidence="1">PLP-independent amino acid racemase</fullName>
    </alternativeName>
</protein>
<reference key="1">
    <citation type="journal article" date="2010" name="BMC Genomics">
        <title>A genomic perspective on the potential of Actinobacillus succinogenes for industrial succinate production.</title>
        <authorList>
            <person name="McKinlay J.B."/>
            <person name="Laivenieks M."/>
            <person name="Schindler B.D."/>
            <person name="McKinlay A.A."/>
            <person name="Siddaramappa S."/>
            <person name="Challacombe J.F."/>
            <person name="Lowry S.R."/>
            <person name="Clum A."/>
            <person name="Lapidus A.L."/>
            <person name="Burkhart K.B."/>
            <person name="Harkins V."/>
            <person name="Vieille C."/>
        </authorList>
    </citation>
    <scope>NUCLEOTIDE SEQUENCE [LARGE SCALE GENOMIC DNA]</scope>
    <source>
        <strain>ATCC 55618 / DSM 22257 / CCUG 43843 / 130Z</strain>
    </source>
</reference>
<sequence length="274" mass="30131">MHFSKMHGLGNDFVVVDAVTQNVFFPEEVIKKLADRHRGIGFDQLLLVEPPYDPELDFHYRIFNADGSEVAQCGNGARCFARFVTLKGLTNKKDIAVSTAKGRMVLTVKDDGQIRVNMGEPIWEPAKIPFNANKFEKNYILRTDIQTVLCGAVSMGNPHCVIQVEDIKTANVAQLGPLLESHERFPERVNAGFMQVIDRHHIKLRVYERGAGETQACGSGACAAAAVGIMQGLLDSPVQVDLPGGSLIIEWDGEGHPLYMTGDATHIYDGVIKL</sequence>
<feature type="chain" id="PRO_1000071713" description="Diaminopimelate epimerase">
    <location>
        <begin position="1"/>
        <end position="274"/>
    </location>
</feature>
<feature type="active site" description="Proton donor" evidence="1">
    <location>
        <position position="73"/>
    </location>
</feature>
<feature type="active site" description="Proton acceptor" evidence="1">
    <location>
        <position position="217"/>
    </location>
</feature>
<feature type="binding site" evidence="1">
    <location>
        <position position="11"/>
    </location>
    <ligand>
        <name>substrate</name>
    </ligand>
</feature>
<feature type="binding site" evidence="1">
    <location>
        <position position="44"/>
    </location>
    <ligand>
        <name>substrate</name>
    </ligand>
</feature>
<feature type="binding site" evidence="1">
    <location>
        <position position="64"/>
    </location>
    <ligand>
        <name>substrate</name>
    </ligand>
</feature>
<feature type="binding site" evidence="1">
    <location>
        <begin position="74"/>
        <end position="75"/>
    </location>
    <ligand>
        <name>substrate</name>
    </ligand>
</feature>
<feature type="binding site" evidence="1">
    <location>
        <position position="157"/>
    </location>
    <ligand>
        <name>substrate</name>
    </ligand>
</feature>
<feature type="binding site" evidence="1">
    <location>
        <position position="190"/>
    </location>
    <ligand>
        <name>substrate</name>
    </ligand>
</feature>
<feature type="binding site" evidence="1">
    <location>
        <begin position="208"/>
        <end position="209"/>
    </location>
    <ligand>
        <name>substrate</name>
    </ligand>
</feature>
<feature type="binding site" evidence="1">
    <location>
        <begin position="218"/>
        <end position="219"/>
    </location>
    <ligand>
        <name>substrate</name>
    </ligand>
</feature>
<feature type="site" description="Could be important to modulate the pK values of the two catalytic cysteine residues" evidence="1">
    <location>
        <position position="159"/>
    </location>
</feature>
<feature type="site" description="Could be important to modulate the pK values of the two catalytic cysteine residues" evidence="1">
    <location>
        <position position="208"/>
    </location>
</feature>
<feature type="site" description="Important for dimerization" evidence="1">
    <location>
        <position position="268"/>
    </location>
</feature>
<accession>A6VQR8</accession>
<organism>
    <name type="scientific">Actinobacillus succinogenes (strain ATCC 55618 / DSM 22257 / CCUG 43843 / 130Z)</name>
    <dbReference type="NCBI Taxonomy" id="339671"/>
    <lineage>
        <taxon>Bacteria</taxon>
        <taxon>Pseudomonadati</taxon>
        <taxon>Pseudomonadota</taxon>
        <taxon>Gammaproteobacteria</taxon>
        <taxon>Pasteurellales</taxon>
        <taxon>Pasteurellaceae</taxon>
        <taxon>Actinobacillus</taxon>
    </lineage>
</organism>
<gene>
    <name evidence="1" type="primary">dapF</name>
    <name type="ordered locus">Asuc_1968</name>
</gene>
<dbReference type="EC" id="5.1.1.7" evidence="1"/>
<dbReference type="EMBL" id="CP000746">
    <property type="protein sequence ID" value="ABR75315.1"/>
    <property type="molecule type" value="Genomic_DNA"/>
</dbReference>
<dbReference type="RefSeq" id="WP_012073692.1">
    <property type="nucleotide sequence ID" value="NC_009655.1"/>
</dbReference>
<dbReference type="SMR" id="A6VQR8"/>
<dbReference type="STRING" id="339671.Asuc_1968"/>
<dbReference type="KEGG" id="asu:Asuc_1968"/>
<dbReference type="eggNOG" id="COG0253">
    <property type="taxonomic scope" value="Bacteria"/>
</dbReference>
<dbReference type="HOGENOM" id="CLU_053306_1_1_6"/>
<dbReference type="OrthoDB" id="9805408at2"/>
<dbReference type="UniPathway" id="UPA00034">
    <property type="reaction ID" value="UER00025"/>
</dbReference>
<dbReference type="Proteomes" id="UP000001114">
    <property type="component" value="Chromosome"/>
</dbReference>
<dbReference type="GO" id="GO:0005829">
    <property type="term" value="C:cytosol"/>
    <property type="evidence" value="ECO:0007669"/>
    <property type="project" value="TreeGrafter"/>
</dbReference>
<dbReference type="GO" id="GO:0008837">
    <property type="term" value="F:diaminopimelate epimerase activity"/>
    <property type="evidence" value="ECO:0007669"/>
    <property type="project" value="UniProtKB-UniRule"/>
</dbReference>
<dbReference type="GO" id="GO:0009089">
    <property type="term" value="P:lysine biosynthetic process via diaminopimelate"/>
    <property type="evidence" value="ECO:0007669"/>
    <property type="project" value="UniProtKB-UniRule"/>
</dbReference>
<dbReference type="FunFam" id="3.10.310.10:FF:000001">
    <property type="entry name" value="Diaminopimelate epimerase"/>
    <property type="match status" value="1"/>
</dbReference>
<dbReference type="FunFam" id="3.10.310.10:FF:000002">
    <property type="entry name" value="Diaminopimelate epimerase"/>
    <property type="match status" value="1"/>
</dbReference>
<dbReference type="Gene3D" id="3.10.310.10">
    <property type="entry name" value="Diaminopimelate Epimerase, Chain A, domain 1"/>
    <property type="match status" value="2"/>
</dbReference>
<dbReference type="HAMAP" id="MF_00197">
    <property type="entry name" value="DAP_epimerase"/>
    <property type="match status" value="1"/>
</dbReference>
<dbReference type="InterPro" id="IPR018510">
    <property type="entry name" value="DAP_epimerase_AS"/>
</dbReference>
<dbReference type="InterPro" id="IPR001653">
    <property type="entry name" value="DAP_epimerase_DapF"/>
</dbReference>
<dbReference type="NCBIfam" id="TIGR00652">
    <property type="entry name" value="DapF"/>
    <property type="match status" value="1"/>
</dbReference>
<dbReference type="PANTHER" id="PTHR31689:SF0">
    <property type="entry name" value="DIAMINOPIMELATE EPIMERASE"/>
    <property type="match status" value="1"/>
</dbReference>
<dbReference type="PANTHER" id="PTHR31689">
    <property type="entry name" value="DIAMINOPIMELATE EPIMERASE, CHLOROPLASTIC"/>
    <property type="match status" value="1"/>
</dbReference>
<dbReference type="Pfam" id="PF01678">
    <property type="entry name" value="DAP_epimerase"/>
    <property type="match status" value="2"/>
</dbReference>
<dbReference type="SUPFAM" id="SSF54506">
    <property type="entry name" value="Diaminopimelate epimerase-like"/>
    <property type="match status" value="1"/>
</dbReference>
<dbReference type="PROSITE" id="PS01326">
    <property type="entry name" value="DAP_EPIMERASE"/>
    <property type="match status" value="1"/>
</dbReference>
<proteinExistence type="inferred from homology"/>
<keyword id="KW-0028">Amino-acid biosynthesis</keyword>
<keyword id="KW-0963">Cytoplasm</keyword>
<keyword id="KW-0413">Isomerase</keyword>
<keyword id="KW-0457">Lysine biosynthesis</keyword>
<keyword id="KW-1185">Reference proteome</keyword>
<name>DAPF_ACTSZ</name>
<evidence type="ECO:0000255" key="1">
    <source>
        <dbReference type="HAMAP-Rule" id="MF_00197"/>
    </source>
</evidence>